<comment type="catalytic activity">
    <reaction evidence="1">
        <text>5-amino-1-(5-phospho-D-ribosyl)imidazole-4-carboxylate + L-aspartate + ATP = (2S)-2-[5-amino-1-(5-phospho-beta-D-ribosyl)imidazole-4-carboxamido]succinate + ADP + phosphate + 2 H(+)</text>
        <dbReference type="Rhea" id="RHEA:22628"/>
        <dbReference type="ChEBI" id="CHEBI:15378"/>
        <dbReference type="ChEBI" id="CHEBI:29991"/>
        <dbReference type="ChEBI" id="CHEBI:30616"/>
        <dbReference type="ChEBI" id="CHEBI:43474"/>
        <dbReference type="ChEBI" id="CHEBI:58443"/>
        <dbReference type="ChEBI" id="CHEBI:77657"/>
        <dbReference type="ChEBI" id="CHEBI:456216"/>
        <dbReference type="EC" id="6.3.2.6"/>
    </reaction>
</comment>
<comment type="pathway">
    <text evidence="1">Purine metabolism; IMP biosynthesis via de novo pathway; 5-amino-1-(5-phospho-D-ribosyl)imidazole-4-carboxamide from 5-amino-1-(5-phospho-D-ribosyl)imidazole-4-carboxylate: step 1/2.</text>
</comment>
<comment type="similarity">
    <text evidence="1">Belongs to the SAICAR synthetase family.</text>
</comment>
<protein>
    <recommendedName>
        <fullName evidence="1">Phosphoribosylaminoimidazole-succinocarboxamide synthase</fullName>
        <ecNumber evidence="1">6.3.2.6</ecNumber>
    </recommendedName>
    <alternativeName>
        <fullName evidence="1">SAICAR synthetase</fullName>
    </alternativeName>
</protein>
<feature type="chain" id="PRO_1000203230" description="Phosphoribosylaminoimidazole-succinocarboxamide synthase">
    <location>
        <begin position="1"/>
        <end position="232"/>
    </location>
</feature>
<name>PUR7_FINM2</name>
<dbReference type="EC" id="6.3.2.6" evidence="1"/>
<dbReference type="EMBL" id="AP008971">
    <property type="protein sequence ID" value="BAG08781.1"/>
    <property type="molecule type" value="Genomic_DNA"/>
</dbReference>
<dbReference type="RefSeq" id="WP_002836979.1">
    <property type="nucleotide sequence ID" value="NC_010376.1"/>
</dbReference>
<dbReference type="SMR" id="B0S341"/>
<dbReference type="STRING" id="334413.FMG_1363"/>
<dbReference type="KEGG" id="fma:FMG_1363"/>
<dbReference type="eggNOG" id="COG0152">
    <property type="taxonomic scope" value="Bacteria"/>
</dbReference>
<dbReference type="HOGENOM" id="CLU_061495_2_0_9"/>
<dbReference type="UniPathway" id="UPA00074">
    <property type="reaction ID" value="UER00131"/>
</dbReference>
<dbReference type="Proteomes" id="UP000001319">
    <property type="component" value="Chromosome"/>
</dbReference>
<dbReference type="GO" id="GO:0005524">
    <property type="term" value="F:ATP binding"/>
    <property type="evidence" value="ECO:0007669"/>
    <property type="project" value="UniProtKB-KW"/>
</dbReference>
<dbReference type="GO" id="GO:0004639">
    <property type="term" value="F:phosphoribosylaminoimidazolesuccinocarboxamide synthase activity"/>
    <property type="evidence" value="ECO:0007669"/>
    <property type="project" value="UniProtKB-UniRule"/>
</dbReference>
<dbReference type="GO" id="GO:0006189">
    <property type="term" value="P:'de novo' IMP biosynthetic process"/>
    <property type="evidence" value="ECO:0007669"/>
    <property type="project" value="UniProtKB-UniRule"/>
</dbReference>
<dbReference type="GO" id="GO:0009236">
    <property type="term" value="P:cobalamin biosynthetic process"/>
    <property type="evidence" value="ECO:0007669"/>
    <property type="project" value="InterPro"/>
</dbReference>
<dbReference type="CDD" id="cd01415">
    <property type="entry name" value="SAICAR_synt_PurC"/>
    <property type="match status" value="1"/>
</dbReference>
<dbReference type="FunFam" id="3.30.470.20:FF:000006">
    <property type="entry name" value="Phosphoribosylaminoimidazole-succinocarboxamide synthase"/>
    <property type="match status" value="1"/>
</dbReference>
<dbReference type="Gene3D" id="3.30.470.20">
    <property type="entry name" value="ATP-grasp fold, B domain"/>
    <property type="match status" value="1"/>
</dbReference>
<dbReference type="Gene3D" id="3.30.200.20">
    <property type="entry name" value="Phosphorylase Kinase, domain 1"/>
    <property type="match status" value="1"/>
</dbReference>
<dbReference type="HAMAP" id="MF_00137">
    <property type="entry name" value="SAICAR_synth"/>
    <property type="match status" value="1"/>
</dbReference>
<dbReference type="InterPro" id="IPR028923">
    <property type="entry name" value="SAICAR_synt/ADE2_N"/>
</dbReference>
<dbReference type="InterPro" id="IPR033934">
    <property type="entry name" value="SAICAR_synt_PurC"/>
</dbReference>
<dbReference type="InterPro" id="IPR001636">
    <property type="entry name" value="SAICAR_synth"/>
</dbReference>
<dbReference type="InterPro" id="IPR050089">
    <property type="entry name" value="SAICAR_synthetase"/>
</dbReference>
<dbReference type="InterPro" id="IPR018236">
    <property type="entry name" value="SAICAR_synthetase_CS"/>
</dbReference>
<dbReference type="NCBIfam" id="TIGR00081">
    <property type="entry name" value="purC"/>
    <property type="match status" value="1"/>
</dbReference>
<dbReference type="PANTHER" id="PTHR43599">
    <property type="entry name" value="MULTIFUNCTIONAL PROTEIN ADE2"/>
    <property type="match status" value="1"/>
</dbReference>
<dbReference type="PANTHER" id="PTHR43599:SF3">
    <property type="entry name" value="SI:DKEY-6E2.2"/>
    <property type="match status" value="1"/>
</dbReference>
<dbReference type="Pfam" id="PF01259">
    <property type="entry name" value="SAICAR_synt"/>
    <property type="match status" value="1"/>
</dbReference>
<dbReference type="SUPFAM" id="SSF56104">
    <property type="entry name" value="SAICAR synthase-like"/>
    <property type="match status" value="1"/>
</dbReference>
<dbReference type="PROSITE" id="PS01058">
    <property type="entry name" value="SAICAR_SYNTHETASE_2"/>
    <property type="match status" value="1"/>
</dbReference>
<evidence type="ECO:0000255" key="1">
    <source>
        <dbReference type="HAMAP-Rule" id="MF_00137"/>
    </source>
</evidence>
<organism>
    <name type="scientific">Finegoldia magna (strain ATCC 29328 / DSM 20472 / WAL 2508)</name>
    <name type="common">Peptostreptococcus magnus</name>
    <dbReference type="NCBI Taxonomy" id="334413"/>
    <lineage>
        <taxon>Bacteria</taxon>
        <taxon>Bacillati</taxon>
        <taxon>Bacillota</taxon>
        <taxon>Tissierellia</taxon>
        <taxon>Tissierellales</taxon>
        <taxon>Peptoniphilaceae</taxon>
        <taxon>Finegoldia</taxon>
    </lineage>
</organism>
<keyword id="KW-0067">ATP-binding</keyword>
<keyword id="KW-0436">Ligase</keyword>
<keyword id="KW-0547">Nucleotide-binding</keyword>
<keyword id="KW-0658">Purine biosynthesis</keyword>
<keyword id="KW-1185">Reference proteome</keyword>
<sequence>MEKLYEGKAKEVYSTEKADEYIIRYKDDATAGNGEKKATIAGKGELNLAITTMIFEMLEKNGIKTHYIETINNTDMRVKKVTIMPLEVIVRNITAGSFAKRYGVEEGRVLNQPTFELSYKDDDLGDPLMCEDHAIALGVITKEEYDYLRKETLKINELLKEFFLKINLKLVDFKIEFGKTDDGQILLADEISPDTCRLWDKDTNKKLDKDIFRRDLGDLTEGYKEVLNRMRG</sequence>
<accession>B0S341</accession>
<reference key="1">
    <citation type="journal article" date="2008" name="DNA Res.">
        <title>Complete genome sequence of Finegoldia magna, an anaerobic opportunistic pathogen.</title>
        <authorList>
            <person name="Goto T."/>
            <person name="Yamashita A."/>
            <person name="Hirakawa H."/>
            <person name="Matsutani M."/>
            <person name="Todo K."/>
            <person name="Ohshima K."/>
            <person name="Toh H."/>
            <person name="Miyamoto K."/>
            <person name="Kuhara S."/>
            <person name="Hattori M."/>
            <person name="Shimizu T."/>
            <person name="Akimoto S."/>
        </authorList>
    </citation>
    <scope>NUCLEOTIDE SEQUENCE [LARGE SCALE GENOMIC DNA]</scope>
    <source>
        <strain>ATCC 29328 / DSM 20472 / WAL 2508</strain>
    </source>
</reference>
<proteinExistence type="inferred from homology"/>
<gene>
    <name evidence="1" type="primary">purC</name>
    <name type="ordered locus">FMG_1363</name>
</gene>